<accession>P30082</accession>
<dbReference type="EMBL" id="L04796">
    <property type="protein sequence ID" value="AAA16439.1"/>
    <property type="molecule type" value="mRNA"/>
</dbReference>
<dbReference type="EMBL" id="X68692">
    <property type="protein sequence ID" value="CAA48651.1"/>
    <property type="molecule type" value="mRNA"/>
</dbReference>
<dbReference type="EMBL" id="M96674">
    <property type="protein sequence ID" value="AAA02992.1"/>
    <property type="molecule type" value="mRNA"/>
</dbReference>
<dbReference type="EMBL" id="U63021">
    <property type="protein sequence ID" value="AAB16800.1"/>
    <property type="molecule type" value="Genomic_DNA"/>
</dbReference>
<dbReference type="PIR" id="JQ1957">
    <property type="entry name" value="JQ1957"/>
</dbReference>
<dbReference type="RefSeq" id="NP_742088.1">
    <property type="nucleotide sequence ID" value="NM_172091.3"/>
</dbReference>
<dbReference type="RefSeq" id="NP_742089.1">
    <property type="nucleotide sequence ID" value="NM_172092.3"/>
</dbReference>
<dbReference type="RefSeq" id="XP_006247938.1">
    <property type="nucleotide sequence ID" value="XM_006247876.3"/>
</dbReference>
<dbReference type="RefSeq" id="XP_038941171.1">
    <property type="nucleotide sequence ID" value="XM_039085243.2"/>
</dbReference>
<dbReference type="SMR" id="P30082"/>
<dbReference type="FunCoup" id="P30082">
    <property type="interactions" value="81"/>
</dbReference>
<dbReference type="STRING" id="10116.ENSRNOP00000051845"/>
<dbReference type="BindingDB" id="P30082"/>
<dbReference type="ChEMBL" id="CHEMBL4720"/>
<dbReference type="DrugCentral" id="P30082"/>
<dbReference type="GuidetoPHARMACOLOGY" id="251"/>
<dbReference type="GlyCosmos" id="P30082">
    <property type="glycosylation" value="4 sites, No reported glycans"/>
</dbReference>
<dbReference type="GlyGen" id="P30082">
    <property type="glycosylation" value="4 sites"/>
</dbReference>
<dbReference type="iPTMnet" id="P30082"/>
<dbReference type="PhosphoSitePlus" id="P30082"/>
<dbReference type="PaxDb" id="10116-ENSRNOP00000051845"/>
<dbReference type="Ensembl" id="ENSRNOT00000054962.3">
    <property type="protein sequence ID" value="ENSRNOP00000051845.1"/>
    <property type="gene ID" value="ENSRNOG00000036692.5"/>
</dbReference>
<dbReference type="GeneID" id="24953"/>
<dbReference type="KEGG" id="rno:24953"/>
<dbReference type="AGR" id="RGD:2669"/>
<dbReference type="CTD" id="2642"/>
<dbReference type="RGD" id="2669">
    <property type="gene designation" value="Gcgr"/>
</dbReference>
<dbReference type="eggNOG" id="KOG4564">
    <property type="taxonomic scope" value="Eukaryota"/>
</dbReference>
<dbReference type="GeneTree" id="ENSGT00940000157969"/>
<dbReference type="HOGENOM" id="CLU_002753_4_0_1"/>
<dbReference type="InParanoid" id="P30082"/>
<dbReference type="OMA" id="HWHRWRL"/>
<dbReference type="PhylomeDB" id="P30082"/>
<dbReference type="TreeFam" id="TF315710"/>
<dbReference type="Reactome" id="R-RNO-163359">
    <property type="pathway name" value="Glucagon signaling in metabolic regulation"/>
</dbReference>
<dbReference type="Reactome" id="R-RNO-416476">
    <property type="pathway name" value="G alpha (q) signalling events"/>
</dbReference>
<dbReference type="Reactome" id="R-RNO-420092">
    <property type="pathway name" value="Glucagon-type ligand receptors"/>
</dbReference>
<dbReference type="PRO" id="PR:P30082"/>
<dbReference type="Proteomes" id="UP000002494">
    <property type="component" value="Chromosome 10"/>
</dbReference>
<dbReference type="Bgee" id="ENSRNOG00000036692">
    <property type="expression patterns" value="Expressed in liver and 18 other cell types or tissues"/>
</dbReference>
<dbReference type="ExpressionAtlas" id="P30082">
    <property type="expression patterns" value="baseline and differential"/>
</dbReference>
<dbReference type="GO" id="GO:0005768">
    <property type="term" value="C:endosome"/>
    <property type="evidence" value="ECO:0000314"/>
    <property type="project" value="RGD"/>
</dbReference>
<dbReference type="GO" id="GO:0005886">
    <property type="term" value="C:plasma membrane"/>
    <property type="evidence" value="ECO:0000250"/>
    <property type="project" value="UniProtKB"/>
</dbReference>
<dbReference type="GO" id="GO:0004967">
    <property type="term" value="F:glucagon receptor activity"/>
    <property type="evidence" value="ECO:0000314"/>
    <property type="project" value="RGD"/>
</dbReference>
<dbReference type="GO" id="GO:0017046">
    <property type="term" value="F:peptide hormone binding"/>
    <property type="evidence" value="ECO:0000314"/>
    <property type="project" value="RGD"/>
</dbReference>
<dbReference type="GO" id="GO:0007189">
    <property type="term" value="P:adenylate cyclase-activating G protein-coupled receptor signaling pathway"/>
    <property type="evidence" value="ECO:0000314"/>
    <property type="project" value="RGD"/>
</dbReference>
<dbReference type="GO" id="GO:0007188">
    <property type="term" value="P:adenylate cyclase-modulating G protein-coupled receptor signaling pathway"/>
    <property type="evidence" value="ECO:0000315"/>
    <property type="project" value="RGD"/>
</dbReference>
<dbReference type="GO" id="GO:0007166">
    <property type="term" value="P:cell surface receptor signaling pathway"/>
    <property type="evidence" value="ECO:0007669"/>
    <property type="project" value="InterPro"/>
</dbReference>
<dbReference type="GO" id="GO:0071377">
    <property type="term" value="P:cellular response to glucagon stimulus"/>
    <property type="evidence" value="ECO:0000266"/>
    <property type="project" value="RGD"/>
</dbReference>
<dbReference type="GO" id="GO:0009267">
    <property type="term" value="P:cellular response to starvation"/>
    <property type="evidence" value="ECO:0000266"/>
    <property type="project" value="RGD"/>
</dbReference>
<dbReference type="GO" id="GO:0006887">
    <property type="term" value="P:exocytosis"/>
    <property type="evidence" value="ECO:0000314"/>
    <property type="project" value="RGD"/>
</dbReference>
<dbReference type="GO" id="GO:0007186">
    <property type="term" value="P:G protein-coupled receptor signaling pathway"/>
    <property type="evidence" value="ECO:0000314"/>
    <property type="project" value="RGD"/>
</dbReference>
<dbReference type="GO" id="GO:0042593">
    <property type="term" value="P:glucose homeostasis"/>
    <property type="evidence" value="ECO:0000250"/>
    <property type="project" value="UniProtKB"/>
</dbReference>
<dbReference type="GO" id="GO:0009755">
    <property type="term" value="P:hormone-mediated signaling pathway"/>
    <property type="evidence" value="ECO:0000314"/>
    <property type="project" value="RGD"/>
</dbReference>
<dbReference type="GO" id="GO:0010628">
    <property type="term" value="P:positive regulation of gene expression"/>
    <property type="evidence" value="ECO:0000266"/>
    <property type="project" value="RGD"/>
</dbReference>
<dbReference type="GO" id="GO:0070873">
    <property type="term" value="P:regulation of glycogen metabolic process"/>
    <property type="evidence" value="ECO:0000250"/>
    <property type="project" value="UniProtKB"/>
</dbReference>
<dbReference type="GO" id="GO:0042594">
    <property type="term" value="P:response to starvation"/>
    <property type="evidence" value="ECO:0000250"/>
    <property type="project" value="UniProtKB"/>
</dbReference>
<dbReference type="CDD" id="cd15267">
    <property type="entry name" value="7tmB1_GCGR"/>
    <property type="match status" value="1"/>
</dbReference>
<dbReference type="FunFam" id="4.10.1240.10:FF:000009">
    <property type="entry name" value="Glucagon receptor"/>
    <property type="match status" value="1"/>
</dbReference>
<dbReference type="FunFam" id="1.20.1070.10:FF:000133">
    <property type="entry name" value="Glucagon receptor a"/>
    <property type="match status" value="1"/>
</dbReference>
<dbReference type="Gene3D" id="4.10.1240.10">
    <property type="entry name" value="GPCR, family 2, extracellular hormone receptor domain"/>
    <property type="match status" value="1"/>
</dbReference>
<dbReference type="Gene3D" id="1.20.1070.10">
    <property type="entry name" value="Rhodopsin 7-helix transmembrane proteins"/>
    <property type="match status" value="1"/>
</dbReference>
<dbReference type="InterPro" id="IPR050332">
    <property type="entry name" value="GPCR_2"/>
</dbReference>
<dbReference type="InterPro" id="IPR017981">
    <property type="entry name" value="GPCR_2-like_7TM"/>
</dbReference>
<dbReference type="InterPro" id="IPR036445">
    <property type="entry name" value="GPCR_2_extracell_dom_sf"/>
</dbReference>
<dbReference type="InterPro" id="IPR001879">
    <property type="entry name" value="GPCR_2_extracellular_dom"/>
</dbReference>
<dbReference type="InterPro" id="IPR003290">
    <property type="entry name" value="GPCR_2_GLP1/glucagon_rcpt"/>
</dbReference>
<dbReference type="InterPro" id="IPR003291">
    <property type="entry name" value="GPCR_2_glucagon_rcpt"/>
</dbReference>
<dbReference type="InterPro" id="IPR000832">
    <property type="entry name" value="GPCR_2_secretin-like"/>
</dbReference>
<dbReference type="InterPro" id="IPR017983">
    <property type="entry name" value="GPCR_2_secretin-like_CS"/>
</dbReference>
<dbReference type="PANTHER" id="PTHR45620:SF29">
    <property type="entry name" value="GLUCAGON RECEPTOR"/>
    <property type="match status" value="1"/>
</dbReference>
<dbReference type="PANTHER" id="PTHR45620">
    <property type="entry name" value="PDF RECEPTOR-LIKE PROTEIN-RELATED"/>
    <property type="match status" value="1"/>
</dbReference>
<dbReference type="Pfam" id="PF00002">
    <property type="entry name" value="7tm_2"/>
    <property type="match status" value="1"/>
</dbReference>
<dbReference type="Pfam" id="PF02793">
    <property type="entry name" value="HRM"/>
    <property type="match status" value="1"/>
</dbReference>
<dbReference type="PRINTS" id="PR01353">
    <property type="entry name" value="GLUCAGNFAMLY"/>
</dbReference>
<dbReference type="PRINTS" id="PR01354">
    <property type="entry name" value="GLUCAGONR"/>
</dbReference>
<dbReference type="PRINTS" id="PR00249">
    <property type="entry name" value="GPCRSECRETIN"/>
</dbReference>
<dbReference type="SMART" id="SM00008">
    <property type="entry name" value="HormR"/>
    <property type="match status" value="1"/>
</dbReference>
<dbReference type="SUPFAM" id="SSF81321">
    <property type="entry name" value="Family A G protein-coupled receptor-like"/>
    <property type="match status" value="1"/>
</dbReference>
<dbReference type="SUPFAM" id="SSF111418">
    <property type="entry name" value="Hormone receptor domain"/>
    <property type="match status" value="1"/>
</dbReference>
<dbReference type="PROSITE" id="PS00649">
    <property type="entry name" value="G_PROTEIN_RECEP_F2_1"/>
    <property type="match status" value="1"/>
</dbReference>
<dbReference type="PROSITE" id="PS00650">
    <property type="entry name" value="G_PROTEIN_RECEP_F2_2"/>
    <property type="match status" value="1"/>
</dbReference>
<dbReference type="PROSITE" id="PS50227">
    <property type="entry name" value="G_PROTEIN_RECEP_F2_3"/>
    <property type="match status" value="1"/>
</dbReference>
<dbReference type="PROSITE" id="PS50261">
    <property type="entry name" value="G_PROTEIN_RECEP_F2_4"/>
    <property type="match status" value="1"/>
</dbReference>
<keyword id="KW-1003">Cell membrane</keyword>
<keyword id="KW-1015">Disulfide bond</keyword>
<keyword id="KW-0297">G-protein coupled receptor</keyword>
<keyword id="KW-0325">Glycoprotein</keyword>
<keyword id="KW-0472">Membrane</keyword>
<keyword id="KW-0597">Phosphoprotein</keyword>
<keyword id="KW-0675">Receptor</keyword>
<keyword id="KW-1185">Reference proteome</keyword>
<keyword id="KW-0732">Signal</keyword>
<keyword id="KW-0807">Transducer</keyword>
<keyword id="KW-0812">Transmembrane</keyword>
<keyword id="KW-1133">Transmembrane helix</keyword>
<proteinExistence type="evidence at protein level"/>
<gene>
    <name type="primary">Gcgr</name>
</gene>
<protein>
    <recommendedName>
        <fullName>Glucagon receptor</fullName>
        <shortName>GL-R</shortName>
    </recommendedName>
</protein>
<feature type="signal peptide" evidence="3">
    <location>
        <begin position="1"/>
        <end position="26"/>
    </location>
</feature>
<feature type="chain" id="PRO_0000012834" description="Glucagon receptor">
    <location>
        <begin position="27"/>
        <end position="485"/>
    </location>
</feature>
<feature type="topological domain" description="Extracellular" evidence="2">
    <location>
        <begin position="27"/>
        <end position="137"/>
    </location>
</feature>
<feature type="transmembrane region" description="Helical; Name=1" evidence="2">
    <location>
        <begin position="138"/>
        <end position="162"/>
    </location>
</feature>
<feature type="topological domain" description="Cytoplasmic" evidence="2">
    <location>
        <begin position="163"/>
        <end position="174"/>
    </location>
</feature>
<feature type="transmembrane region" description="Helical; Name=2" evidence="2">
    <location>
        <begin position="175"/>
        <end position="199"/>
    </location>
</feature>
<feature type="topological domain" description="Extracellular" evidence="2">
    <location>
        <begin position="200"/>
        <end position="226"/>
    </location>
</feature>
<feature type="transmembrane region" description="Helical; Name=3" evidence="2">
    <location>
        <begin position="227"/>
        <end position="250"/>
    </location>
</feature>
<feature type="topological domain" description="Cytoplasmic" evidence="2">
    <location>
        <begin position="251"/>
        <end position="264"/>
    </location>
</feature>
<feature type="transmembrane region" description="Helical; Name=4" evidence="2">
    <location>
        <begin position="265"/>
        <end position="286"/>
    </location>
</feature>
<feature type="topological domain" description="Extracellular" evidence="2">
    <location>
        <begin position="287"/>
        <end position="304"/>
    </location>
</feature>
<feature type="transmembrane region" description="Helical; Name=5" evidence="2">
    <location>
        <begin position="305"/>
        <end position="327"/>
    </location>
</feature>
<feature type="topological domain" description="Cytoplasmic" evidence="2">
    <location>
        <begin position="328"/>
        <end position="351"/>
    </location>
</feature>
<feature type="transmembrane region" description="Helical; Name=6" evidence="2">
    <location>
        <begin position="352"/>
        <end position="370"/>
    </location>
</feature>
<feature type="topological domain" description="Extracellular" evidence="2">
    <location>
        <begin position="371"/>
        <end position="382"/>
    </location>
</feature>
<feature type="transmembrane region" description="Helical; Name=7" evidence="2">
    <location>
        <begin position="383"/>
        <end position="403"/>
    </location>
</feature>
<feature type="topological domain" description="Cytoplasmic" evidence="2">
    <location>
        <begin position="404"/>
        <end position="485"/>
    </location>
</feature>
<feature type="region of interest" description="Important for allosteric inhibitor binding" evidence="2">
    <location>
        <begin position="351"/>
        <end position="354"/>
    </location>
</feature>
<feature type="region of interest" description="Disordered" evidence="4">
    <location>
        <begin position="455"/>
        <end position="485"/>
    </location>
</feature>
<feature type="compositionally biased region" description="Polar residues" evidence="4">
    <location>
        <begin position="456"/>
        <end position="475"/>
    </location>
</feature>
<feature type="modified residue" description="Phosphoserine" evidence="2">
    <location>
        <position position="460"/>
    </location>
</feature>
<feature type="modified residue" description="Phosphoserine" evidence="7">
    <location>
        <position position="476"/>
    </location>
</feature>
<feature type="glycosylation site" description="N-linked (GlcNAc...) asparagine" evidence="3">
    <location>
        <position position="47"/>
    </location>
</feature>
<feature type="glycosylation site" description="N-linked (GlcNAc...) asparagine" evidence="3">
    <location>
        <position position="60"/>
    </location>
</feature>
<feature type="glycosylation site" description="N-linked (GlcNAc...) asparagine" evidence="3">
    <location>
        <position position="75"/>
    </location>
</feature>
<feature type="glycosylation site" description="N-linked (GlcNAc...) asparagine" evidence="3">
    <location>
        <position position="79"/>
    </location>
</feature>
<feature type="disulfide bond" evidence="2">
    <location>
        <begin position="44"/>
        <end position="68"/>
    </location>
</feature>
<feature type="disulfide bond" evidence="2">
    <location>
        <begin position="59"/>
        <end position="101"/>
    </location>
</feature>
<feature type="disulfide bond" evidence="2">
    <location>
        <begin position="82"/>
        <end position="122"/>
    </location>
</feature>
<feature type="disulfide bond" evidence="2">
    <location>
        <begin position="225"/>
        <end position="295"/>
    </location>
</feature>
<feature type="sequence conflict" description="In Ref. 2." evidence="6" ref="2">
    <original>W</original>
    <variation>C</variation>
    <location>
        <position position="216"/>
    </location>
</feature>
<feature type="sequence conflict" description="In Ref. 2." evidence="6" ref="2">
    <original>V</original>
    <variation>A</variation>
    <location>
        <position position="324"/>
    </location>
</feature>
<evidence type="ECO:0000250" key="1">
    <source>
        <dbReference type="UniProtKB" id="A0A2Z2U4G9"/>
    </source>
</evidence>
<evidence type="ECO:0000250" key="2">
    <source>
        <dbReference type="UniProtKB" id="P47871"/>
    </source>
</evidence>
<evidence type="ECO:0000255" key="3"/>
<evidence type="ECO:0000256" key="4">
    <source>
        <dbReference type="SAM" id="MobiDB-lite"/>
    </source>
</evidence>
<evidence type="ECO:0000269" key="5">
    <source>
    </source>
</evidence>
<evidence type="ECO:0000305" key="6"/>
<evidence type="ECO:0007744" key="7">
    <source>
    </source>
</evidence>
<organism>
    <name type="scientific">Rattus norvegicus</name>
    <name type="common">Rat</name>
    <dbReference type="NCBI Taxonomy" id="10116"/>
    <lineage>
        <taxon>Eukaryota</taxon>
        <taxon>Metazoa</taxon>
        <taxon>Chordata</taxon>
        <taxon>Craniata</taxon>
        <taxon>Vertebrata</taxon>
        <taxon>Euteleostomi</taxon>
        <taxon>Mammalia</taxon>
        <taxon>Eutheria</taxon>
        <taxon>Euarchontoglires</taxon>
        <taxon>Glires</taxon>
        <taxon>Rodentia</taxon>
        <taxon>Myomorpha</taxon>
        <taxon>Muroidea</taxon>
        <taxon>Muridae</taxon>
        <taxon>Murinae</taxon>
        <taxon>Rattus</taxon>
    </lineage>
</organism>
<reference key="1">
    <citation type="journal article" date="1993" name="Science">
        <title>Expression cloning and signaling properties of the rat glucagon receptor.</title>
        <authorList>
            <person name="Jelinek L.J."/>
            <person name="Lok S."/>
            <person name="Grant F.J."/>
            <person name="Rosenberg G.B."/>
            <person name="Smith R.A."/>
            <person name="Bensch P.A."/>
            <person name="Sheppard P.O."/>
            <person name="O'Hara P.J."/>
            <person name="Foster D.C."/>
            <person name="Kuijper J.L."/>
            <person name="Biggs S.H."/>
            <person name="Walker K.M."/>
            <person name="Chen L.H."/>
            <person name="McKernan P.A."/>
            <person name="Kindsvogel W."/>
        </authorList>
    </citation>
    <scope>NUCLEOTIDE SEQUENCE [MRNA]</scope>
    <scope>FUNCTION</scope>
    <scope>SUBCELLULAR LOCATION</scope>
</reference>
<reference key="2">
    <citation type="journal article" date="1993" name="Biochem. Biophys. Res. Commun.">
        <title>Small introns in a hepatic cDNA encoding a new glucagon-like peptide 1-type receptor.</title>
        <authorList>
            <person name="Svoboda M."/>
            <person name="Ciccarelli E."/>
            <person name="Tastenoy M."/>
            <person name="Cauvin A."/>
            <person name="Stievenart M."/>
            <person name="Christophe J."/>
        </authorList>
    </citation>
    <scope>NUCLEOTIDE SEQUENCE [MRNA]</scope>
</reference>
<reference key="3">
    <citation type="journal article" date="1994" name="FEBS Lett.">
        <title>Sequencing of eleven introns in genomic DNA encoding rat glucagon receptor and multiple alternative splicing of its mRNA.</title>
        <authorList>
            <person name="Maget B."/>
            <person name="Tastenoy M."/>
            <person name="Svoboda M."/>
        </authorList>
    </citation>
    <scope>NUCLEOTIDE SEQUENCE [GENOMIC DNA]</scope>
    <source>
        <strain>Wistar</strain>
        <tissue>Liver</tissue>
    </source>
</reference>
<reference key="4">
    <citation type="journal article" date="2012" name="Nat. Commun.">
        <title>Quantitative maps of protein phosphorylation sites across 14 different rat organs and tissues.</title>
        <authorList>
            <person name="Lundby A."/>
            <person name="Secher A."/>
            <person name="Lage K."/>
            <person name="Nordsborg N.B."/>
            <person name="Dmytriyev A."/>
            <person name="Lundby C."/>
            <person name="Olsen J.V."/>
        </authorList>
    </citation>
    <scope>PHOSPHORYLATION [LARGE SCALE ANALYSIS] AT SER-476</scope>
    <scope>IDENTIFICATION BY MASS SPECTROMETRY [LARGE SCALE ANALYSIS]</scope>
</reference>
<sequence>MLLTQLHCPYLLLLLVVLSCLPKAPSAQVMDFLFEKWKLYSDQCHHNLSLLPPPTELVCNRTFDKYSCWPDTPPNTTANISCPWYLPWYHKVQHRLVFKRCGPDGQWVRGPRGQSWRDASQCQMDDDEIEVQKGVAKMYSSYQVMYTVGYSLSLGALLLALVILLGLRKLHCTRNYIHGNLFASFVLKAGSVLVIDWLLKTRYSQKIGDDLSVSVWLSDGAVAGCRVATVIMQYGIIANYCWLLVEGVYLYSLLSITTFSEKSFFSLYLCIGWGSPLLFVIPWVVVKCLFENVQCWTSNDNMGFWWILRIPVLLAILINFFIFVRIIHLLVAKLRAHQMHYADYKFRLARSTLTLIPLLGVHEVVFAFVTDEHAQGTLRSTKLFFDLFFSSFQGLLVAVLYCFLNKEVQAELLRRWRRWQEGKALQEERMASSHGSHMAPAGTCHGDPCEKLQLMSAGSSSGTGCEPSAKTSLASSLPRLADSPT</sequence>
<comment type="function">
    <text evidence="5">G-protein coupled receptor for glucagon that plays a central role in the regulation of blood glucose levels and glucose homeostasis. Regulates the rate of hepatic glucose production by promoting glycogen hydrolysis and gluconeogenesis. Plays an important role in mediating the responses to fasting. Ligand binding causes a conformation change that triggers signaling via guanine nucleotide-binding proteins (G proteins) and modulates the activity of down-stream effectors, such as adenylate cyclase. Promotes activation of adenylate cyclase. Besides, plays a role in signaling via a phosphatidylinositol-calcium second messenger system.</text>
</comment>
<comment type="subcellular location">
    <subcellularLocation>
        <location evidence="5">Cell membrane</location>
        <topology evidence="5">Multi-pass membrane protein</topology>
    </subcellularLocation>
    <text evidence="2">Is rapidly internalized after ligand-binding.</text>
</comment>
<comment type="PTM">
    <text evidence="2">Ligand-binding promotes phosphorylation of serine residues in the C-terminal cytoplasmic domain. Phosphorylation is important for receptor endocytosis after ligand-binding (By similarity).</text>
</comment>
<comment type="miscellaneous">
    <text evidence="1">Selective recognition of glucagon over glucagon-like peptide is determined by residues located at the N-terminal end of the glucagon peptide.</text>
</comment>
<comment type="similarity">
    <text evidence="6">Belongs to the G-protein coupled receptor 2 family.</text>
</comment>
<name>GLR_RAT</name>